<feature type="chain" id="PRO_0000227435" description="UvrABC system protein C">
    <location>
        <begin position="1"/>
        <end position="609"/>
    </location>
</feature>
<feature type="domain" description="GIY-YIG" evidence="1">
    <location>
        <begin position="13"/>
        <end position="91"/>
    </location>
</feature>
<feature type="domain" description="UVR" evidence="1">
    <location>
        <begin position="201"/>
        <end position="236"/>
    </location>
</feature>
<keyword id="KW-0963">Cytoplasm</keyword>
<keyword id="KW-0227">DNA damage</keyword>
<keyword id="KW-0228">DNA excision</keyword>
<keyword id="KW-0234">DNA repair</keyword>
<keyword id="KW-0267">Excision nuclease</keyword>
<keyword id="KW-0742">SOS response</keyword>
<name>UVRC_HAEI8</name>
<organism>
    <name type="scientific">Haemophilus influenzae (strain 86-028NP)</name>
    <dbReference type="NCBI Taxonomy" id="281310"/>
    <lineage>
        <taxon>Bacteria</taxon>
        <taxon>Pseudomonadati</taxon>
        <taxon>Pseudomonadota</taxon>
        <taxon>Gammaproteobacteria</taxon>
        <taxon>Pasteurellales</taxon>
        <taxon>Pasteurellaceae</taxon>
        <taxon>Haemophilus</taxon>
    </lineage>
</organism>
<sequence>MFDAKKFLADVSHEPGVYRMYDDKDQVIYVGKAKDLKKRLSSYFRKNLSSKKTEALVASIHHIDTMLTSSETEALLLEHNFIKLYQPRYNVLLRDDKSYPFILLTKERHPRITSYRGSKKFAGEYFGPYPHAGAVRETLSLLQKLFPVRQCENSVYSNRSRPCLQYQIGRCSAPCVQGYVSDEEYNQQVELARLFLQGKDQQVLDYLIGKMEQASRNLDFEQAARYRDQIQAVRSVIEKQFVSNERLDDMDIMSIAYQHGLACVQVMFIRQGKVLGNRSYFPKVPANTDLSELTETFVGQFYLQGHQGRSIPNSIIVDRQLAEKSELEQLLTEQAGRKVTIQESVKGDKSKYLQLAQVNAKAALNVQLKQSSRMSERYQALCDLLNLPEIKRMECFDISHTMGNQTVASCVVFNQEGPLKSDYRRFNIEGITGGDDYAAMEQALQKRYERDLEEDKIPDIIFIDGGKGQLNRALNVFQHLQVKWDKNRPHLIGVAKGVDRRAGQEVLIISKQDREIHLPDDSLALHLIQHIRDESHNHAISGHRKKRQKAFTQSGLETIEGVGAKRRQALLKYLGGLQGVKKATLDEIASVPGISLKLAETIFETLKND</sequence>
<comment type="function">
    <text evidence="1">The UvrABC repair system catalyzes the recognition and processing of DNA lesions. UvrC both incises the 5' and 3' sides of the lesion. The N-terminal half is responsible for the 3' incision and the C-terminal half is responsible for the 5' incision.</text>
</comment>
<comment type="subunit">
    <text evidence="1">Interacts with UvrB in an incision complex.</text>
</comment>
<comment type="subcellular location">
    <subcellularLocation>
        <location evidence="1">Cytoplasm</location>
    </subcellularLocation>
</comment>
<comment type="similarity">
    <text evidence="1">Belongs to the UvrC family.</text>
</comment>
<evidence type="ECO:0000255" key="1">
    <source>
        <dbReference type="HAMAP-Rule" id="MF_00203"/>
    </source>
</evidence>
<gene>
    <name evidence="1" type="primary">uvrC</name>
    <name type="ordered locus">NTHI0067</name>
</gene>
<protein>
    <recommendedName>
        <fullName evidence="1">UvrABC system protein C</fullName>
        <shortName evidence="1">Protein UvrC</shortName>
    </recommendedName>
    <alternativeName>
        <fullName evidence="1">Excinuclease ABC subunit C</fullName>
    </alternativeName>
</protein>
<reference key="1">
    <citation type="journal article" date="2005" name="J. Bacteriol.">
        <title>Genomic sequence of an otitis media isolate of nontypeable Haemophilus influenzae: comparative study with H. influenzae serotype d, strain KW20.</title>
        <authorList>
            <person name="Harrison A."/>
            <person name="Dyer D.W."/>
            <person name="Gillaspy A."/>
            <person name="Ray W.C."/>
            <person name="Mungur R."/>
            <person name="Carson M.B."/>
            <person name="Zhong H."/>
            <person name="Gipson J."/>
            <person name="Gipson M."/>
            <person name="Johnson L.S."/>
            <person name="Lewis L."/>
            <person name="Bakaletz L.O."/>
            <person name="Munson R.S. Jr."/>
        </authorList>
    </citation>
    <scope>NUCLEOTIDE SEQUENCE [LARGE SCALE GENOMIC DNA]</scope>
    <source>
        <strain>86-028NP</strain>
    </source>
</reference>
<proteinExistence type="inferred from homology"/>
<dbReference type="EMBL" id="CP000057">
    <property type="protein sequence ID" value="AAX87060.1"/>
    <property type="molecule type" value="Genomic_DNA"/>
</dbReference>
<dbReference type="RefSeq" id="WP_011271801.1">
    <property type="nucleotide sequence ID" value="NC_007146.2"/>
</dbReference>
<dbReference type="SMR" id="Q4QPI7"/>
<dbReference type="KEGG" id="hit:NTHI0067"/>
<dbReference type="HOGENOM" id="CLU_014841_3_0_6"/>
<dbReference type="Proteomes" id="UP000002525">
    <property type="component" value="Chromosome"/>
</dbReference>
<dbReference type="GO" id="GO:0005737">
    <property type="term" value="C:cytoplasm"/>
    <property type="evidence" value="ECO:0007669"/>
    <property type="project" value="UniProtKB-SubCell"/>
</dbReference>
<dbReference type="GO" id="GO:0009380">
    <property type="term" value="C:excinuclease repair complex"/>
    <property type="evidence" value="ECO:0007669"/>
    <property type="project" value="InterPro"/>
</dbReference>
<dbReference type="GO" id="GO:0003677">
    <property type="term" value="F:DNA binding"/>
    <property type="evidence" value="ECO:0007669"/>
    <property type="project" value="UniProtKB-UniRule"/>
</dbReference>
<dbReference type="GO" id="GO:0009381">
    <property type="term" value="F:excinuclease ABC activity"/>
    <property type="evidence" value="ECO:0007669"/>
    <property type="project" value="UniProtKB-UniRule"/>
</dbReference>
<dbReference type="GO" id="GO:0006289">
    <property type="term" value="P:nucleotide-excision repair"/>
    <property type="evidence" value="ECO:0007669"/>
    <property type="project" value="UniProtKB-UniRule"/>
</dbReference>
<dbReference type="GO" id="GO:0009432">
    <property type="term" value="P:SOS response"/>
    <property type="evidence" value="ECO:0007669"/>
    <property type="project" value="UniProtKB-UniRule"/>
</dbReference>
<dbReference type="CDD" id="cd10434">
    <property type="entry name" value="GIY-YIG_UvrC_Cho"/>
    <property type="match status" value="1"/>
</dbReference>
<dbReference type="FunFam" id="1.10.150.20:FF:000005">
    <property type="entry name" value="UvrABC system protein C"/>
    <property type="match status" value="1"/>
</dbReference>
<dbReference type="FunFam" id="3.30.420.340:FF:000001">
    <property type="entry name" value="UvrABC system protein C"/>
    <property type="match status" value="1"/>
</dbReference>
<dbReference type="FunFam" id="3.40.1440.10:FF:000001">
    <property type="entry name" value="UvrABC system protein C"/>
    <property type="match status" value="1"/>
</dbReference>
<dbReference type="FunFam" id="4.10.860.10:FF:000002">
    <property type="entry name" value="UvrABC system protein C"/>
    <property type="match status" value="1"/>
</dbReference>
<dbReference type="Gene3D" id="1.10.150.20">
    <property type="entry name" value="5' to 3' exonuclease, C-terminal subdomain"/>
    <property type="match status" value="1"/>
</dbReference>
<dbReference type="Gene3D" id="3.40.1440.10">
    <property type="entry name" value="GIY-YIG endonuclease"/>
    <property type="match status" value="1"/>
</dbReference>
<dbReference type="Gene3D" id="4.10.860.10">
    <property type="entry name" value="UVR domain"/>
    <property type="match status" value="1"/>
</dbReference>
<dbReference type="Gene3D" id="3.30.420.340">
    <property type="entry name" value="UvrC, RNAse H endonuclease domain"/>
    <property type="match status" value="1"/>
</dbReference>
<dbReference type="HAMAP" id="MF_00203">
    <property type="entry name" value="UvrC"/>
    <property type="match status" value="1"/>
</dbReference>
<dbReference type="InterPro" id="IPR000305">
    <property type="entry name" value="GIY-YIG_endonuc"/>
</dbReference>
<dbReference type="InterPro" id="IPR035901">
    <property type="entry name" value="GIY-YIG_endonuc_sf"/>
</dbReference>
<dbReference type="InterPro" id="IPR047296">
    <property type="entry name" value="GIY-YIG_UvrC_Cho"/>
</dbReference>
<dbReference type="InterPro" id="IPR003583">
    <property type="entry name" value="Hlx-hairpin-Hlx_DNA-bd_motif"/>
</dbReference>
<dbReference type="InterPro" id="IPR010994">
    <property type="entry name" value="RuvA_2-like"/>
</dbReference>
<dbReference type="InterPro" id="IPR001943">
    <property type="entry name" value="UVR_dom"/>
</dbReference>
<dbReference type="InterPro" id="IPR036876">
    <property type="entry name" value="UVR_dom_sf"/>
</dbReference>
<dbReference type="InterPro" id="IPR050066">
    <property type="entry name" value="UvrABC_protein_C"/>
</dbReference>
<dbReference type="InterPro" id="IPR004791">
    <property type="entry name" value="UvrC"/>
</dbReference>
<dbReference type="InterPro" id="IPR001162">
    <property type="entry name" value="UvrC_RNase_H_dom"/>
</dbReference>
<dbReference type="InterPro" id="IPR038476">
    <property type="entry name" value="UvrC_RNase_H_dom_sf"/>
</dbReference>
<dbReference type="NCBIfam" id="NF001824">
    <property type="entry name" value="PRK00558.1-5"/>
    <property type="match status" value="1"/>
</dbReference>
<dbReference type="NCBIfam" id="TIGR00194">
    <property type="entry name" value="uvrC"/>
    <property type="match status" value="1"/>
</dbReference>
<dbReference type="PANTHER" id="PTHR30562:SF1">
    <property type="entry name" value="UVRABC SYSTEM PROTEIN C"/>
    <property type="match status" value="1"/>
</dbReference>
<dbReference type="PANTHER" id="PTHR30562">
    <property type="entry name" value="UVRC/OXIDOREDUCTASE"/>
    <property type="match status" value="1"/>
</dbReference>
<dbReference type="Pfam" id="PF01541">
    <property type="entry name" value="GIY-YIG"/>
    <property type="match status" value="1"/>
</dbReference>
<dbReference type="Pfam" id="PF14520">
    <property type="entry name" value="HHH_5"/>
    <property type="match status" value="1"/>
</dbReference>
<dbReference type="Pfam" id="PF02151">
    <property type="entry name" value="UVR"/>
    <property type="match status" value="1"/>
</dbReference>
<dbReference type="Pfam" id="PF22920">
    <property type="entry name" value="UvrC_RNaseH"/>
    <property type="match status" value="1"/>
</dbReference>
<dbReference type="Pfam" id="PF08459">
    <property type="entry name" value="UvrC_RNaseH_dom"/>
    <property type="match status" value="1"/>
</dbReference>
<dbReference type="SMART" id="SM00465">
    <property type="entry name" value="GIYc"/>
    <property type="match status" value="1"/>
</dbReference>
<dbReference type="SMART" id="SM00278">
    <property type="entry name" value="HhH1"/>
    <property type="match status" value="2"/>
</dbReference>
<dbReference type="SUPFAM" id="SSF46600">
    <property type="entry name" value="C-terminal UvrC-binding domain of UvrB"/>
    <property type="match status" value="1"/>
</dbReference>
<dbReference type="SUPFAM" id="SSF82771">
    <property type="entry name" value="GIY-YIG endonuclease"/>
    <property type="match status" value="1"/>
</dbReference>
<dbReference type="SUPFAM" id="SSF47781">
    <property type="entry name" value="RuvA domain 2-like"/>
    <property type="match status" value="1"/>
</dbReference>
<dbReference type="PROSITE" id="PS50164">
    <property type="entry name" value="GIY_YIG"/>
    <property type="match status" value="1"/>
</dbReference>
<dbReference type="PROSITE" id="PS50151">
    <property type="entry name" value="UVR"/>
    <property type="match status" value="1"/>
</dbReference>
<dbReference type="PROSITE" id="PS50165">
    <property type="entry name" value="UVRC"/>
    <property type="match status" value="1"/>
</dbReference>
<accession>Q4QPI7</accession>